<name>MATK_IRIDA</name>
<gene>
    <name evidence="1" type="primary">matK</name>
</gene>
<geneLocation type="chloroplast"/>
<evidence type="ECO:0000255" key="1">
    <source>
        <dbReference type="HAMAP-Rule" id="MF_01390"/>
    </source>
</evidence>
<accession>Q5GF76</accession>
<comment type="function">
    <text evidence="1">Usually encoded in the trnK tRNA gene intron. Probably assists in splicing its own and other chloroplast group II introns.</text>
</comment>
<comment type="subcellular location">
    <subcellularLocation>
        <location>Plastid</location>
        <location>Chloroplast</location>
    </subcellularLocation>
</comment>
<comment type="similarity">
    <text evidence="1">Belongs to the intron maturase 2 family. MatK subfamily.</text>
</comment>
<proteinExistence type="inferred from homology"/>
<protein>
    <recommendedName>
        <fullName evidence="1">Maturase K</fullName>
    </recommendedName>
    <alternativeName>
        <fullName evidence="1">Intron maturase</fullName>
    </alternativeName>
</protein>
<feature type="chain" id="PRO_0000143435" description="Maturase K">
    <location>
        <begin position="1"/>
        <end position="522"/>
    </location>
</feature>
<dbReference type="EMBL" id="AY596630">
    <property type="protein sequence ID" value="AAW67429.2"/>
    <property type="molecule type" value="Genomic_DNA"/>
</dbReference>
<dbReference type="GO" id="GO:0009507">
    <property type="term" value="C:chloroplast"/>
    <property type="evidence" value="ECO:0007669"/>
    <property type="project" value="UniProtKB-SubCell"/>
</dbReference>
<dbReference type="GO" id="GO:0003723">
    <property type="term" value="F:RNA binding"/>
    <property type="evidence" value="ECO:0007669"/>
    <property type="project" value="UniProtKB-KW"/>
</dbReference>
<dbReference type="GO" id="GO:0006397">
    <property type="term" value="P:mRNA processing"/>
    <property type="evidence" value="ECO:0007669"/>
    <property type="project" value="UniProtKB-KW"/>
</dbReference>
<dbReference type="GO" id="GO:0008380">
    <property type="term" value="P:RNA splicing"/>
    <property type="evidence" value="ECO:0007669"/>
    <property type="project" value="UniProtKB-UniRule"/>
</dbReference>
<dbReference type="GO" id="GO:0008033">
    <property type="term" value="P:tRNA processing"/>
    <property type="evidence" value="ECO:0007669"/>
    <property type="project" value="UniProtKB-KW"/>
</dbReference>
<dbReference type="HAMAP" id="MF_01390">
    <property type="entry name" value="MatK"/>
    <property type="match status" value="1"/>
</dbReference>
<dbReference type="InterPro" id="IPR024937">
    <property type="entry name" value="Domain_X"/>
</dbReference>
<dbReference type="InterPro" id="IPR002866">
    <property type="entry name" value="Maturase_MatK"/>
</dbReference>
<dbReference type="InterPro" id="IPR024942">
    <property type="entry name" value="Maturase_MatK_N"/>
</dbReference>
<dbReference type="PANTHER" id="PTHR34811">
    <property type="entry name" value="MATURASE K"/>
    <property type="match status" value="1"/>
</dbReference>
<dbReference type="PANTHER" id="PTHR34811:SF1">
    <property type="entry name" value="MATURASE K"/>
    <property type="match status" value="1"/>
</dbReference>
<dbReference type="Pfam" id="PF01348">
    <property type="entry name" value="Intron_maturas2"/>
    <property type="match status" value="1"/>
</dbReference>
<dbReference type="Pfam" id="PF01824">
    <property type="entry name" value="MatK_N"/>
    <property type="match status" value="1"/>
</dbReference>
<keyword id="KW-0150">Chloroplast</keyword>
<keyword id="KW-0507">mRNA processing</keyword>
<keyword id="KW-0934">Plastid</keyword>
<keyword id="KW-0694">RNA-binding</keyword>
<keyword id="KW-0819">tRNA processing</keyword>
<sequence>MEELQGYLEKDRSRQQPFXYPLLFQEYIYALAHDRGLKGSLFYEPTEVFGYDSKSSLALVKRLIIRIYQQNDFTSVVNDSNKNQFVNHHHNNFGYSHFYSQMISEGFAILVEIPFSLRLVSYFEKKEIPKSHNLRSIHSIFPFLEGKLXHLNYVSDILIPHPVHMEILIQILQCWIQDAPLLHFXRFFLHKXHNWBRFLXTPKESXYVFSKXNKRLFRFLYNSYVSECEFLLVFLRKKSSYLRLTSFGLFLERRHFYVKMEHLQMQHLILIVVCLDYXQGTLWSFXXXXXXXVRCQGXVVLASKGTHLLMKKWKYNFVNLWQYHFHFWYQSYRIHINQLSNYSLYFLGYLSSLLRNSSTVRNQMLENSFLIDTVTNKLETLVPVIFLIGSLSKAQFCTVSGHPISKPIWADLSDFEIIERFGRMCRNLSHYHSGSSKKQELHRIKYILRLSCARTLARKHKSTVRTFLRRLGSVLLEEFFTEEEQVLSLILPKAIPFTFYGSHKERIWHLDIIRINDLVNHS</sequence>
<reference key="1">
    <citation type="journal article" date="2004" name="Mol. Phylogenet. Evol.">
        <title>Phylogeny of Iris based on chloroplast matK gene and trnK intron sequence data.</title>
        <authorList>
            <person name="Wilson C.A."/>
        </authorList>
    </citation>
    <scope>NUCLEOTIDE SEQUENCE [GENOMIC DNA]</scope>
</reference>
<organism>
    <name type="scientific">Iris danfordiae</name>
    <name type="common">Danford iris</name>
    <name type="synonym">Xiphion danfordiae</name>
    <dbReference type="NCBI Taxonomy" id="292523"/>
    <lineage>
        <taxon>Eukaryota</taxon>
        <taxon>Viridiplantae</taxon>
        <taxon>Streptophyta</taxon>
        <taxon>Embryophyta</taxon>
        <taxon>Tracheophyta</taxon>
        <taxon>Spermatophyta</taxon>
        <taxon>Magnoliopsida</taxon>
        <taxon>Liliopsida</taxon>
        <taxon>Asparagales</taxon>
        <taxon>Iridaceae</taxon>
        <taxon>Iridoideae</taxon>
        <taxon>Irideae</taxon>
        <taxon>Iris</taxon>
    </lineage>
</organism>